<keyword id="KW-0158">Chromosome</keyword>
<keyword id="KW-0238">DNA-binding</keyword>
<keyword id="KW-0479">Metal-binding</keyword>
<keyword id="KW-0539">Nucleus</keyword>
<keyword id="KW-0597">Phosphoprotein</keyword>
<keyword id="KW-1267">Proteomics identification</keyword>
<keyword id="KW-1185">Reference proteome</keyword>
<keyword id="KW-0677">Repeat</keyword>
<keyword id="KW-0804">Transcription</keyword>
<keyword id="KW-0805">Transcription regulation</keyword>
<keyword id="KW-0862">Zinc</keyword>
<keyword id="KW-0863">Zinc-finger</keyword>
<accession>Q9H5H4</accession>
<accession>Q569L7</accession>
<accession>Q96CX4</accession>
<sequence>MEREALPWGLEPQDVQSSDEMRSPEGYLRGNMSENEEEEISQQEGSGDYEVEEIPFGLEPQSPGFEPQSPEFEPQSPRFEPESPGFESRSPGLVPPSPEFAPRSPESDSQSPEFESQSPRYEPQSPGYEPRSPGYEPRSPGYESESSRYESQNTELKTQSPEFEAQSSKFQEGAEMLLNPEEKSPLNISVGVHPLDSFTQGFGEQPTGDLPIGPPFEMPTGALLSTPQFEMLQNPLGLTGALRGPGRRGGRARGGQGPRPNICGICGKSFGRGSTLIQHQRIHTGEKPYKCEVCSKAFSQSSDLIKHQRTHTGERPYKCPRCGKAFADSSYLLRHQRTHSGQKPYKCPHCGKAFGDSSYLLRHQRTHSHERPYSCTECGKCYSQNSSLRSHQRVHTGQRPFSCGICGKSFSQRSALIPHARSHAREKPFKCPECGKRFGQSSVLAIHARTHLPGRTYSCPDCGKTFNRSSTLIQHQRSHTGERPYRCAVCGKGFCRSSTLLQHHRVHSGERPYKCDDCGKAFSQSSDLIRHQRTHAAGRR</sequence>
<proteinExistence type="evidence at protein level"/>
<gene>
    <name type="primary">ZNF768</name>
</gene>
<feature type="chain" id="PRO_0000304408" description="Zinc finger protein 768">
    <location>
        <begin position="1"/>
        <end position="540"/>
    </location>
</feature>
<feature type="zinc finger region" description="C2H2-type 1" evidence="1">
    <location>
        <begin position="261"/>
        <end position="283"/>
    </location>
</feature>
<feature type="zinc finger region" description="C2H2-type 2" evidence="1">
    <location>
        <begin position="289"/>
        <end position="311"/>
    </location>
</feature>
<feature type="zinc finger region" description="C2H2-type 3" evidence="1">
    <location>
        <begin position="317"/>
        <end position="339"/>
    </location>
</feature>
<feature type="zinc finger region" description="C2H2-type 4" evidence="1">
    <location>
        <begin position="345"/>
        <end position="367"/>
    </location>
</feature>
<feature type="zinc finger region" description="C2H2-type 5" evidence="1">
    <location>
        <begin position="373"/>
        <end position="395"/>
    </location>
</feature>
<feature type="zinc finger region" description="C2H2-type 6" evidence="1">
    <location>
        <begin position="401"/>
        <end position="423"/>
    </location>
</feature>
<feature type="zinc finger region" description="C2H2-type 7" evidence="1">
    <location>
        <begin position="429"/>
        <end position="451"/>
    </location>
</feature>
<feature type="zinc finger region" description="C2H2-type 8" evidence="1">
    <location>
        <begin position="457"/>
        <end position="479"/>
    </location>
</feature>
<feature type="zinc finger region" description="C2H2-type 9" evidence="1">
    <location>
        <begin position="485"/>
        <end position="507"/>
    </location>
</feature>
<feature type="zinc finger region" description="C2H2-type 10" evidence="1">
    <location>
        <begin position="513"/>
        <end position="535"/>
    </location>
</feature>
<feature type="region of interest" description="Disordered" evidence="2">
    <location>
        <begin position="1"/>
        <end position="166"/>
    </location>
</feature>
<feature type="region of interest" description="Disordered" evidence="2">
    <location>
        <begin position="239"/>
        <end position="258"/>
    </location>
</feature>
<feature type="compositionally biased region" description="Acidic residues" evidence="2">
    <location>
        <begin position="34"/>
        <end position="53"/>
    </location>
</feature>
<feature type="compositionally biased region" description="Low complexity" evidence="2">
    <location>
        <begin position="62"/>
        <end position="77"/>
    </location>
</feature>
<feature type="compositionally biased region" description="Polar residues" evidence="2">
    <location>
        <begin position="107"/>
        <end position="119"/>
    </location>
</feature>
<feature type="compositionally biased region" description="Polar residues" evidence="2">
    <location>
        <begin position="149"/>
        <end position="166"/>
    </location>
</feature>
<feature type="modified residue" description="Phosphoserine" evidence="5 10">
    <location>
        <position position="17"/>
    </location>
</feature>
<feature type="modified residue" description="Phosphoserine" evidence="5">
    <location>
        <position position="18"/>
    </location>
</feature>
<feature type="modified residue" description="Phosphoserine" evidence="5">
    <location>
        <position position="23"/>
    </location>
</feature>
<feature type="modified residue" description="Phosphotyrosine" evidence="5">
    <location>
        <position position="27"/>
    </location>
</feature>
<feature type="modified residue" description="Phosphoserine" evidence="5">
    <location>
        <position position="33"/>
    </location>
</feature>
<feature type="modified residue" description="Phosphoserine" evidence="5">
    <location>
        <position position="62"/>
    </location>
</feature>
<feature type="modified residue" description="Phosphoserine" evidence="5">
    <location>
        <position position="69"/>
    </location>
</feature>
<feature type="modified residue" description="Phosphoserine" evidence="5">
    <location>
        <position position="76"/>
    </location>
</feature>
<feature type="modified residue" description="Phosphoserine" evidence="5 8 10 11 12">
    <location>
        <position position="83"/>
    </location>
</feature>
<feature type="modified residue" description="Phosphoserine" evidence="5 11 12">
    <location>
        <position position="90"/>
    </location>
</feature>
<feature type="modified residue" description="Phosphoserine" evidence="5 9 11 12">
    <location>
        <position position="97"/>
    </location>
</feature>
<feature type="modified residue" description="Phosphoserine" evidence="5">
    <location>
        <position position="104"/>
    </location>
</feature>
<feature type="modified residue" description="Phosphoserine" evidence="5">
    <location>
        <position position="107"/>
    </location>
</feature>
<feature type="modified residue" description="Phosphoserine" evidence="5">
    <location>
        <position position="111"/>
    </location>
</feature>
<feature type="modified residue" description="Phosphoserine" evidence="5">
    <location>
        <position position="118"/>
    </location>
</feature>
<feature type="modified residue" description="Phosphoserine" evidence="5 12">
    <location>
        <position position="125"/>
    </location>
</feature>
<feature type="modified residue" description="Phosphotyrosine" evidence="5">
    <location>
        <position position="128"/>
    </location>
</feature>
<feature type="modified residue" description="Phosphoserine" evidence="5 12">
    <location>
        <position position="132"/>
    </location>
</feature>
<feature type="modified residue" description="Phosphotyrosine" evidence="5">
    <location>
        <position position="135"/>
    </location>
</feature>
<feature type="modified residue" description="Phosphoserine" evidence="5 12">
    <location>
        <position position="139"/>
    </location>
</feature>
<feature type="modified residue" description="Phosphotyrosine" evidence="5">
    <location>
        <position position="142"/>
    </location>
</feature>
<feature type="modified residue" description="Phosphoserine" evidence="5">
    <location>
        <position position="144"/>
    </location>
</feature>
<feature type="modified residue" description="Phosphoserine" evidence="5">
    <location>
        <position position="147"/>
    </location>
</feature>
<feature type="modified residue" description="Phosphothreonine" evidence="5">
    <location>
        <position position="158"/>
    </location>
</feature>
<feature type="modified residue" description="Phosphoserine" evidence="5 8 12">
    <location>
        <position position="160"/>
    </location>
</feature>
<feature type="modified residue" description="Phosphothreonine" evidence="5">
    <location>
        <position position="284"/>
    </location>
</feature>
<feature type="modified residue" description="Phosphotyrosine" evidence="5">
    <location>
        <position position="289"/>
    </location>
</feature>
<feature type="modified residue" description="Phosphoserine" evidence="5">
    <location>
        <position position="295"/>
    </location>
</feature>
<feature type="modified residue" description="Phosphoserine" evidence="5">
    <location>
        <position position="299"/>
    </location>
</feature>
<feature type="modified residue" description="Phosphothreonine" evidence="5">
    <location>
        <position position="396"/>
    </location>
</feature>
<feature type="modified residue" description="Phosphoserine" evidence="5">
    <location>
        <position position="442"/>
    </location>
</feature>
<feature type="sequence variant" id="VAR_035024" description="In dbSNP:rs10871453." evidence="3">
    <original>E</original>
    <variation>D</variation>
    <location>
        <position position="181"/>
    </location>
</feature>
<feature type="sequence variant" id="VAR_052900" description="In dbSNP:rs3751848.">
    <original>A</original>
    <variation>S</variation>
    <location>
        <position position="488"/>
    </location>
</feature>
<feature type="mutagenesis site" description="Increases protein stability." evidence="5">
    <original>S</original>
    <variation>A</variation>
    <location>
        <position position="62"/>
    </location>
</feature>
<feature type="mutagenesis site" description="Increases protein stability." evidence="5">
    <original>S</original>
    <variation>A</variation>
    <location>
        <position position="69"/>
    </location>
</feature>
<feature type="mutagenesis site" description="Increases protein stability." evidence="5">
    <original>S</original>
    <variation>A</variation>
    <location>
        <position position="76"/>
    </location>
</feature>
<feature type="mutagenesis site" description="Increases protein stability." evidence="5">
    <original>S</original>
    <variation>A</variation>
    <location>
        <position position="83"/>
    </location>
</feature>
<feature type="mutagenesis site" description="No effect on protein stability." evidence="5">
    <original>S</original>
    <variation>A</variation>
    <location>
        <position position="90"/>
    </location>
</feature>
<feature type="mutagenesis site" description="No effect on protein stability." evidence="5">
    <original>S</original>
    <variation>A</variation>
    <location>
        <position position="97"/>
    </location>
</feature>
<feature type="mutagenesis site" description="No effect on protein stability." evidence="5">
    <original>S</original>
    <variation>A</variation>
    <location>
        <position position="125"/>
    </location>
</feature>
<feature type="mutagenesis site" description="No effect on protein stability." evidence="5">
    <original>S</original>
    <variation>A</variation>
    <location>
        <position position="132"/>
    </location>
</feature>
<feature type="mutagenesis site" description="Increases protein stability." evidence="5">
    <original>S</original>
    <variation>A</variation>
    <location>
        <position position="139"/>
    </location>
</feature>
<feature type="mutagenesis site" description="No effect on protein stability." evidence="5">
    <original>S</original>
    <variation>A</variation>
    <location>
        <position position="160"/>
    </location>
</feature>
<dbReference type="EMBL" id="BC013760">
    <property type="protein sequence ID" value="AAH13760.1"/>
    <property type="status" value="ALT_INIT"/>
    <property type="molecule type" value="mRNA"/>
</dbReference>
<dbReference type="EMBL" id="BC092403">
    <property type="protein sequence ID" value="AAH92403.2"/>
    <property type="status" value="ALT_INIT"/>
    <property type="molecule type" value="mRNA"/>
</dbReference>
<dbReference type="EMBL" id="AK027089">
    <property type="protein sequence ID" value="BAB15652.1"/>
    <property type="status" value="ALT_INIT"/>
    <property type="molecule type" value="mRNA"/>
</dbReference>
<dbReference type="CCDS" id="CCDS10681.2"/>
<dbReference type="RefSeq" id="NP_078947.3">
    <property type="nucleotide sequence ID" value="NM_024671.3"/>
</dbReference>
<dbReference type="SMR" id="Q9H5H4"/>
<dbReference type="BioGRID" id="122839">
    <property type="interactions" value="186"/>
</dbReference>
<dbReference type="FunCoup" id="Q9H5H4">
    <property type="interactions" value="199"/>
</dbReference>
<dbReference type="IntAct" id="Q9H5H4">
    <property type="interactions" value="94"/>
</dbReference>
<dbReference type="MINT" id="Q9H5H4"/>
<dbReference type="STRING" id="9606.ENSP00000369777"/>
<dbReference type="GlyGen" id="Q9H5H4">
    <property type="glycosylation" value="1 site, 1 O-linked glycan (1 site)"/>
</dbReference>
<dbReference type="iPTMnet" id="Q9H5H4"/>
<dbReference type="PhosphoSitePlus" id="Q9H5H4"/>
<dbReference type="BioMuta" id="ZNF768"/>
<dbReference type="DMDM" id="158564024"/>
<dbReference type="jPOST" id="Q9H5H4"/>
<dbReference type="MassIVE" id="Q9H5H4"/>
<dbReference type="PaxDb" id="9606-ENSP00000369777"/>
<dbReference type="PeptideAtlas" id="Q9H5H4"/>
<dbReference type="ProteomicsDB" id="80905"/>
<dbReference type="Pumba" id="Q9H5H4"/>
<dbReference type="Antibodypedia" id="13715">
    <property type="antibodies" value="129 antibodies from 20 providers"/>
</dbReference>
<dbReference type="DNASU" id="79724"/>
<dbReference type="Ensembl" id="ENST00000380412.7">
    <property type="protein sequence ID" value="ENSP00000369777.5"/>
    <property type="gene ID" value="ENSG00000169957.10"/>
</dbReference>
<dbReference type="GeneID" id="79724"/>
<dbReference type="KEGG" id="hsa:79724"/>
<dbReference type="MANE-Select" id="ENST00000380412.7">
    <property type="protein sequence ID" value="ENSP00000369777.5"/>
    <property type="RefSeq nucleotide sequence ID" value="NM_024671.4"/>
    <property type="RefSeq protein sequence ID" value="NP_078947.3"/>
</dbReference>
<dbReference type="UCSC" id="uc002dyk.4">
    <property type="organism name" value="human"/>
</dbReference>
<dbReference type="AGR" id="HGNC:26273"/>
<dbReference type="CTD" id="79724"/>
<dbReference type="DisGeNET" id="79724"/>
<dbReference type="GeneCards" id="ZNF768"/>
<dbReference type="HGNC" id="HGNC:26273">
    <property type="gene designation" value="ZNF768"/>
</dbReference>
<dbReference type="HPA" id="ENSG00000169957">
    <property type="expression patterns" value="Low tissue specificity"/>
</dbReference>
<dbReference type="MIM" id="618032">
    <property type="type" value="gene"/>
</dbReference>
<dbReference type="neXtProt" id="NX_Q9H5H4"/>
<dbReference type="OpenTargets" id="ENSG00000169957"/>
<dbReference type="PharmGKB" id="PA162410327"/>
<dbReference type="VEuPathDB" id="HostDB:ENSG00000169957"/>
<dbReference type="eggNOG" id="KOG1721">
    <property type="taxonomic scope" value="Eukaryota"/>
</dbReference>
<dbReference type="GeneTree" id="ENSGT00940000162267"/>
<dbReference type="InParanoid" id="Q9H5H4"/>
<dbReference type="OMA" id="SPQFEML"/>
<dbReference type="OrthoDB" id="1095242at2759"/>
<dbReference type="PAN-GO" id="Q9H5H4">
    <property type="GO annotations" value="3 GO annotations based on evolutionary models"/>
</dbReference>
<dbReference type="PhylomeDB" id="Q9H5H4"/>
<dbReference type="TreeFam" id="TF350793"/>
<dbReference type="PathwayCommons" id="Q9H5H4"/>
<dbReference type="SignaLink" id="Q9H5H4"/>
<dbReference type="BioGRID-ORCS" id="79724">
    <property type="hits" value="11 hits in 1183 CRISPR screens"/>
</dbReference>
<dbReference type="ChiTaRS" id="ZNF768">
    <property type="organism name" value="human"/>
</dbReference>
<dbReference type="GenomeRNAi" id="79724"/>
<dbReference type="Pharos" id="Q9H5H4">
    <property type="development level" value="Tdark"/>
</dbReference>
<dbReference type="PRO" id="PR:Q9H5H4"/>
<dbReference type="Proteomes" id="UP000005640">
    <property type="component" value="Chromosome 16"/>
</dbReference>
<dbReference type="RNAct" id="Q9H5H4">
    <property type="molecule type" value="protein"/>
</dbReference>
<dbReference type="Bgee" id="ENSG00000169957">
    <property type="expression patterns" value="Expressed in apex of heart and 203 other cell types or tissues"/>
</dbReference>
<dbReference type="ExpressionAtlas" id="Q9H5H4">
    <property type="expression patterns" value="baseline and differential"/>
</dbReference>
<dbReference type="GO" id="GO:0005694">
    <property type="term" value="C:chromosome"/>
    <property type="evidence" value="ECO:0007669"/>
    <property type="project" value="UniProtKB-SubCell"/>
</dbReference>
<dbReference type="GO" id="GO:0005634">
    <property type="term" value="C:nucleus"/>
    <property type="evidence" value="ECO:0000318"/>
    <property type="project" value="GO_Central"/>
</dbReference>
<dbReference type="GO" id="GO:0000981">
    <property type="term" value="F:DNA-binding transcription factor activity, RNA polymerase II-specific"/>
    <property type="evidence" value="ECO:0000318"/>
    <property type="project" value="GO_Central"/>
</dbReference>
<dbReference type="GO" id="GO:0003723">
    <property type="term" value="F:RNA binding"/>
    <property type="evidence" value="ECO:0007005"/>
    <property type="project" value="UniProtKB"/>
</dbReference>
<dbReference type="GO" id="GO:0000977">
    <property type="term" value="F:RNA polymerase II transcription regulatory region sequence-specific DNA binding"/>
    <property type="evidence" value="ECO:0000318"/>
    <property type="project" value="GO_Central"/>
</dbReference>
<dbReference type="GO" id="GO:1990837">
    <property type="term" value="F:sequence-specific double-stranded DNA binding"/>
    <property type="evidence" value="ECO:0000314"/>
    <property type="project" value="UniProtKB"/>
</dbReference>
<dbReference type="GO" id="GO:0008270">
    <property type="term" value="F:zinc ion binding"/>
    <property type="evidence" value="ECO:0007669"/>
    <property type="project" value="UniProtKB-KW"/>
</dbReference>
<dbReference type="GO" id="GO:0006357">
    <property type="term" value="P:regulation of transcription by RNA polymerase II"/>
    <property type="evidence" value="ECO:0000318"/>
    <property type="project" value="GO_Central"/>
</dbReference>
<dbReference type="GO" id="GO:0006366">
    <property type="term" value="P:transcription by RNA polymerase II"/>
    <property type="evidence" value="ECO:0007669"/>
    <property type="project" value="InterPro"/>
</dbReference>
<dbReference type="FunFam" id="3.30.160.60:FF:000322">
    <property type="entry name" value="GDNF-inducible zinc finger protein 1"/>
    <property type="match status" value="1"/>
</dbReference>
<dbReference type="FunFam" id="3.30.160.60:FF:000953">
    <property type="entry name" value="Zinc finger protein 691"/>
    <property type="match status" value="2"/>
</dbReference>
<dbReference type="FunFam" id="3.30.160.60:FF:000710">
    <property type="entry name" value="Zinc finger protein 768"/>
    <property type="match status" value="1"/>
</dbReference>
<dbReference type="FunFam" id="3.30.160.60:FF:000775">
    <property type="entry name" value="Zinc finger protein 768"/>
    <property type="match status" value="1"/>
</dbReference>
<dbReference type="FunFam" id="3.30.160.60:FF:000972">
    <property type="entry name" value="Zinc finger protein 768"/>
    <property type="match status" value="1"/>
</dbReference>
<dbReference type="FunFam" id="3.30.160.60:FF:001784">
    <property type="entry name" value="Zinc finger protein 768"/>
    <property type="match status" value="1"/>
</dbReference>
<dbReference type="FunFam" id="3.30.160.60:FF:000336">
    <property type="entry name" value="zinc finger protein 768"/>
    <property type="match status" value="1"/>
</dbReference>
<dbReference type="FunFam" id="3.30.160.60:FF:000628">
    <property type="entry name" value="zinc finger protein 768"/>
    <property type="match status" value="1"/>
</dbReference>
<dbReference type="FunFam" id="3.30.160.60:FF:001051">
    <property type="entry name" value="zinc finger protein 768"/>
    <property type="match status" value="1"/>
</dbReference>
<dbReference type="Gene3D" id="3.30.160.60">
    <property type="entry name" value="Classic Zinc Finger"/>
    <property type="match status" value="10"/>
</dbReference>
<dbReference type="InterPro" id="IPR000684">
    <property type="entry name" value="RNA_pol_II_repeat_euk"/>
</dbReference>
<dbReference type="InterPro" id="IPR036236">
    <property type="entry name" value="Znf_C2H2_sf"/>
</dbReference>
<dbReference type="InterPro" id="IPR013087">
    <property type="entry name" value="Znf_C2H2_type"/>
</dbReference>
<dbReference type="PANTHER" id="PTHR23226">
    <property type="entry name" value="ZINC FINGER AND SCAN DOMAIN-CONTAINING"/>
    <property type="match status" value="1"/>
</dbReference>
<dbReference type="PANTHER" id="PTHR23226:SF85">
    <property type="entry name" value="ZINC FINGER PROTEIN 397"/>
    <property type="match status" value="1"/>
</dbReference>
<dbReference type="Pfam" id="PF05001">
    <property type="entry name" value="RNA_pol_Rpb1_R"/>
    <property type="match status" value="4"/>
</dbReference>
<dbReference type="Pfam" id="PF00096">
    <property type="entry name" value="zf-C2H2"/>
    <property type="match status" value="10"/>
</dbReference>
<dbReference type="SMART" id="SM00355">
    <property type="entry name" value="ZnF_C2H2"/>
    <property type="match status" value="10"/>
</dbReference>
<dbReference type="SUPFAM" id="SSF57667">
    <property type="entry name" value="beta-beta-alpha zinc fingers"/>
    <property type="match status" value="6"/>
</dbReference>
<dbReference type="PROSITE" id="PS00028">
    <property type="entry name" value="ZINC_FINGER_C2H2_1"/>
    <property type="match status" value="10"/>
</dbReference>
<dbReference type="PROSITE" id="PS50157">
    <property type="entry name" value="ZINC_FINGER_C2H2_2"/>
    <property type="match status" value="10"/>
</dbReference>
<protein>
    <recommendedName>
        <fullName>Zinc finger protein 768</fullName>
    </recommendedName>
</protein>
<evidence type="ECO:0000255" key="1">
    <source>
        <dbReference type="PROSITE-ProRule" id="PRU00042"/>
    </source>
</evidence>
<evidence type="ECO:0000256" key="2">
    <source>
        <dbReference type="SAM" id="MobiDB-lite"/>
    </source>
</evidence>
<evidence type="ECO:0000269" key="3">
    <source>
    </source>
</evidence>
<evidence type="ECO:0000269" key="4">
    <source>
    </source>
</evidence>
<evidence type="ECO:0000269" key="5">
    <source>
    </source>
</evidence>
<evidence type="ECO:0000305" key="6"/>
<evidence type="ECO:0000305" key="7">
    <source>
    </source>
</evidence>
<evidence type="ECO:0007744" key="8">
    <source>
    </source>
</evidence>
<evidence type="ECO:0007744" key="9">
    <source>
    </source>
</evidence>
<evidence type="ECO:0007744" key="10">
    <source>
    </source>
</evidence>
<evidence type="ECO:0007744" key="11">
    <source>
    </source>
</evidence>
<evidence type="ECO:0007744" key="12">
    <source>
    </source>
</evidence>
<comment type="function">
    <text evidence="4 5 6">Binds to mammalian-wide interspersed repeat (MIRs) sequences in euchromatin and promoter regions of genes at the consensus sequence 5'-GCTGTGTG-[N20]-CCTCTCTG-3', consisting of two anchor regions connected by a linker region; the linker region probably does not contribute to the binding specificity (PubMed:30476274). Required for cell homeostasis (PubMed:34404770). May be involved in transcriptional regulation (Probable).</text>
</comment>
<comment type="subunit">
    <text evidence="4 5">Interacts (via zinc-finger domains) with TP53 (via N-terminus); interaction might be facilitated by TP53 oligomerization state (PubMed:34404770). Interacts with ELP3 (PubMed:30476274).</text>
</comment>
<comment type="interaction">
    <interactant intactId="EBI-1210580">
        <id>Q9H5H4</id>
    </interactant>
    <interactant intactId="EBI-750020">
        <id>P49760</id>
        <label>CLK2</label>
    </interactant>
    <organismsDiffer>false</organismsDiffer>
    <experiments>3</experiments>
</comment>
<comment type="interaction">
    <interactant intactId="EBI-1210580">
        <id>Q9H5H4</id>
    </interactant>
    <interactant intactId="EBI-743414">
        <id>O95967</id>
        <label>EFEMP2</label>
    </interactant>
    <organismsDiffer>false</organismsDiffer>
    <experiments>3</experiments>
</comment>
<comment type="interaction">
    <interactant intactId="EBI-1210580">
        <id>Q9H5H4</id>
    </interactant>
    <interactant intactId="EBI-718638">
        <id>Q92979</id>
        <label>EMG1</label>
    </interactant>
    <organismsDiffer>false</organismsDiffer>
    <experiments>3</experiments>
</comment>
<comment type="interaction">
    <interactant intactId="EBI-1210580">
        <id>Q9H5H4</id>
    </interactant>
    <interactant intactId="EBI-714158">
        <id>Q13526</id>
        <label>PIN1</label>
    </interactant>
    <organismsDiffer>false</organismsDiffer>
    <experiments>5</experiments>
</comment>
<comment type="interaction">
    <interactant intactId="EBI-1210580">
        <id>Q9H5H4</id>
    </interactant>
    <interactant intactId="EBI-354442">
        <id>P46783</id>
        <label>RPS10</label>
    </interactant>
    <organismsDiffer>false</organismsDiffer>
    <experiments>2</experiments>
</comment>
<comment type="interaction">
    <interactant intactId="EBI-1210580">
        <id>Q9H5H4</id>
    </interactant>
    <interactant intactId="EBI-727004">
        <id>O00560</id>
        <label>SDCBP</label>
    </interactant>
    <organismsDiffer>false</organismsDiffer>
    <experiments>3</experiments>
</comment>
<comment type="interaction">
    <interactant intactId="EBI-1210580">
        <id>Q9H5H4</id>
    </interactant>
    <interactant intactId="EBI-10177272">
        <id>P15622-3</id>
        <label>ZNF250</label>
    </interactant>
    <organismsDiffer>false</organismsDiffer>
    <experiments>3</experiments>
</comment>
<comment type="interaction">
    <interactant intactId="EBI-1210580">
        <id>Q9H5H4</id>
    </interactant>
    <interactant intactId="EBI-373456">
        <id>Q9Y3S2</id>
        <label>ZNF330</label>
    </interactant>
    <organismsDiffer>false</organismsDiffer>
    <experiments>3</experiments>
</comment>
<comment type="interaction">
    <interactant intactId="EBI-1210580">
        <id>Q9H5H4</id>
    </interactant>
    <interactant intactId="EBI-740727">
        <id>Q8TAU3</id>
        <label>ZNF417</label>
    </interactant>
    <organismsDiffer>false</organismsDiffer>
    <experiments>3</experiments>
</comment>
<comment type="interaction">
    <interactant intactId="EBI-1210580">
        <id>Q9H5H4</id>
    </interactant>
    <interactant intactId="EBI-11985915">
        <id>Q5T619</id>
        <label>ZNF648</label>
    </interactant>
    <organismsDiffer>false</organismsDiffer>
    <experiments>3</experiments>
</comment>
<comment type="interaction">
    <interactant intactId="EBI-1210580">
        <id>Q9H5H4</id>
    </interactant>
    <interactant intactId="EBI-5667516">
        <id>Q9Y2P0</id>
        <label>ZNF835</label>
    </interactant>
    <organismsDiffer>false</organismsDiffer>
    <experiments>3</experiments>
</comment>
<comment type="subcellular location">
    <subcellularLocation>
        <location evidence="7">Nucleus</location>
    </subcellularLocation>
    <subcellularLocation>
        <location evidence="4">Chromosome</location>
    </subcellularLocation>
    <text evidence="4">Localizes to euchromatin.</text>
</comment>
<comment type="PTM">
    <text evidence="4 5">May be phosphorylated at residue 'Ser-5' of the tandem heptapeptide repeats in the N-terminus (PubMed:30476274). Phosphorylation might be increased upon RAS pathway activation and negatively regulate protein stability (PubMed:34404770).</text>
</comment>
<comment type="similarity">
    <text evidence="6">Belongs to the krueppel C2H2-type zinc-finger protein family.</text>
</comment>
<comment type="sequence caution" evidence="6">
    <conflict type="erroneous initiation">
        <sequence resource="EMBL-CDS" id="AAH13760"/>
    </conflict>
</comment>
<comment type="sequence caution" evidence="6">
    <conflict type="erroneous initiation">
        <sequence resource="EMBL-CDS" id="AAH92403"/>
    </conflict>
</comment>
<comment type="sequence caution" evidence="6">
    <conflict type="erroneous initiation">
        <sequence resource="EMBL-CDS" id="BAB15652"/>
    </conflict>
</comment>
<organism>
    <name type="scientific">Homo sapiens</name>
    <name type="common">Human</name>
    <dbReference type="NCBI Taxonomy" id="9606"/>
    <lineage>
        <taxon>Eukaryota</taxon>
        <taxon>Metazoa</taxon>
        <taxon>Chordata</taxon>
        <taxon>Craniata</taxon>
        <taxon>Vertebrata</taxon>
        <taxon>Euteleostomi</taxon>
        <taxon>Mammalia</taxon>
        <taxon>Eutheria</taxon>
        <taxon>Euarchontoglires</taxon>
        <taxon>Primates</taxon>
        <taxon>Haplorrhini</taxon>
        <taxon>Catarrhini</taxon>
        <taxon>Hominidae</taxon>
        <taxon>Homo</taxon>
    </lineage>
</organism>
<name>ZN768_HUMAN</name>
<reference key="1">
    <citation type="journal article" date="2004" name="Genome Res.">
        <title>The status, quality, and expansion of the NIH full-length cDNA project: the Mammalian Gene Collection (MGC).</title>
        <authorList>
            <consortium name="The MGC Project Team"/>
        </authorList>
    </citation>
    <scope>NUCLEOTIDE SEQUENCE [LARGE SCALE MRNA]</scope>
    <scope>VARIANT ASP-181</scope>
    <source>
        <tissue>Ovary</tissue>
        <tissue>PNS</tissue>
    </source>
</reference>
<reference key="2">
    <citation type="journal article" date="2004" name="Nat. Genet.">
        <title>Complete sequencing and characterization of 21,243 full-length human cDNAs.</title>
        <authorList>
            <person name="Ota T."/>
            <person name="Suzuki Y."/>
            <person name="Nishikawa T."/>
            <person name="Otsuki T."/>
            <person name="Sugiyama T."/>
            <person name="Irie R."/>
            <person name="Wakamatsu A."/>
            <person name="Hayashi K."/>
            <person name="Sato H."/>
            <person name="Nagai K."/>
            <person name="Kimura K."/>
            <person name="Makita H."/>
            <person name="Sekine M."/>
            <person name="Obayashi M."/>
            <person name="Nishi T."/>
            <person name="Shibahara T."/>
            <person name="Tanaka T."/>
            <person name="Ishii S."/>
            <person name="Yamamoto J."/>
            <person name="Saito K."/>
            <person name="Kawai Y."/>
            <person name="Isono Y."/>
            <person name="Nakamura Y."/>
            <person name="Nagahari K."/>
            <person name="Murakami K."/>
            <person name="Yasuda T."/>
            <person name="Iwayanagi T."/>
            <person name="Wagatsuma M."/>
            <person name="Shiratori A."/>
            <person name="Sudo H."/>
            <person name="Hosoiri T."/>
            <person name="Kaku Y."/>
            <person name="Kodaira H."/>
            <person name="Kondo H."/>
            <person name="Sugawara M."/>
            <person name="Takahashi M."/>
            <person name="Kanda K."/>
            <person name="Yokoi T."/>
            <person name="Furuya T."/>
            <person name="Kikkawa E."/>
            <person name="Omura Y."/>
            <person name="Abe K."/>
            <person name="Kamihara K."/>
            <person name="Katsuta N."/>
            <person name="Sato K."/>
            <person name="Tanikawa M."/>
            <person name="Yamazaki M."/>
            <person name="Ninomiya K."/>
            <person name="Ishibashi T."/>
            <person name="Yamashita H."/>
            <person name="Murakawa K."/>
            <person name="Fujimori K."/>
            <person name="Tanai H."/>
            <person name="Kimata M."/>
            <person name="Watanabe M."/>
            <person name="Hiraoka S."/>
            <person name="Chiba Y."/>
            <person name="Ishida S."/>
            <person name="Ono Y."/>
            <person name="Takiguchi S."/>
            <person name="Watanabe S."/>
            <person name="Yosida M."/>
            <person name="Hotuta T."/>
            <person name="Kusano J."/>
            <person name="Kanehori K."/>
            <person name="Takahashi-Fujii A."/>
            <person name="Hara H."/>
            <person name="Tanase T.-O."/>
            <person name="Nomura Y."/>
            <person name="Togiya S."/>
            <person name="Komai F."/>
            <person name="Hara R."/>
            <person name="Takeuchi K."/>
            <person name="Arita M."/>
            <person name="Imose N."/>
            <person name="Musashino K."/>
            <person name="Yuuki H."/>
            <person name="Oshima A."/>
            <person name="Sasaki N."/>
            <person name="Aotsuka S."/>
            <person name="Yoshikawa Y."/>
            <person name="Matsunawa H."/>
            <person name="Ichihara T."/>
            <person name="Shiohata N."/>
            <person name="Sano S."/>
            <person name="Moriya S."/>
            <person name="Momiyama H."/>
            <person name="Satoh N."/>
            <person name="Takami S."/>
            <person name="Terashima Y."/>
            <person name="Suzuki O."/>
            <person name="Nakagawa S."/>
            <person name="Senoh A."/>
            <person name="Mizoguchi H."/>
            <person name="Goto Y."/>
            <person name="Shimizu F."/>
            <person name="Wakebe H."/>
            <person name="Hishigaki H."/>
            <person name="Watanabe T."/>
            <person name="Sugiyama A."/>
            <person name="Takemoto M."/>
            <person name="Kawakami B."/>
            <person name="Yamazaki M."/>
            <person name="Watanabe K."/>
            <person name="Kumagai A."/>
            <person name="Itakura S."/>
            <person name="Fukuzumi Y."/>
            <person name="Fujimori Y."/>
            <person name="Komiyama M."/>
            <person name="Tashiro H."/>
            <person name="Tanigami A."/>
            <person name="Fujiwara T."/>
            <person name="Ono T."/>
            <person name="Yamada K."/>
            <person name="Fujii Y."/>
            <person name="Ozaki K."/>
            <person name="Hirao M."/>
            <person name="Ohmori Y."/>
            <person name="Kawabata A."/>
            <person name="Hikiji T."/>
            <person name="Kobatake N."/>
            <person name="Inagaki H."/>
            <person name="Ikema Y."/>
            <person name="Okamoto S."/>
            <person name="Okitani R."/>
            <person name="Kawakami T."/>
            <person name="Noguchi S."/>
            <person name="Itoh T."/>
            <person name="Shigeta K."/>
            <person name="Senba T."/>
            <person name="Matsumura K."/>
            <person name="Nakajima Y."/>
            <person name="Mizuno T."/>
            <person name="Morinaga M."/>
            <person name="Sasaki M."/>
            <person name="Togashi T."/>
            <person name="Oyama M."/>
            <person name="Hata H."/>
            <person name="Watanabe M."/>
            <person name="Komatsu T."/>
            <person name="Mizushima-Sugano J."/>
            <person name="Satoh T."/>
            <person name="Shirai Y."/>
            <person name="Takahashi Y."/>
            <person name="Nakagawa K."/>
            <person name="Okumura K."/>
            <person name="Nagase T."/>
            <person name="Nomura N."/>
            <person name="Kikuchi H."/>
            <person name="Masuho Y."/>
            <person name="Yamashita R."/>
            <person name="Nakai K."/>
            <person name="Yada T."/>
            <person name="Nakamura Y."/>
            <person name="Ohara O."/>
            <person name="Isogai T."/>
            <person name="Sugano S."/>
        </authorList>
    </citation>
    <scope>NUCLEOTIDE SEQUENCE [LARGE SCALE MRNA] OF 19-540</scope>
    <source>
        <tissue>Epithelium</tissue>
    </source>
</reference>
<reference key="3">
    <citation type="journal article" date="2006" name="Nat. Biotechnol.">
        <title>A probability-based approach for high-throughput protein phosphorylation analysis and site localization.</title>
        <authorList>
            <person name="Beausoleil S.A."/>
            <person name="Villen J."/>
            <person name="Gerber S.A."/>
            <person name="Rush J."/>
            <person name="Gygi S.P."/>
        </authorList>
    </citation>
    <scope>PHOSPHORYLATION [LARGE SCALE ANALYSIS] AT SER-83 AND SER-160</scope>
    <scope>IDENTIFICATION BY MASS SPECTROMETRY [LARGE SCALE ANALYSIS]</scope>
    <source>
        <tissue>Cervix carcinoma</tissue>
    </source>
</reference>
<reference key="4">
    <citation type="journal article" date="2008" name="J. Proteome Res.">
        <title>Combining protein-based IMAC, peptide-based IMAC, and MudPIT for efficient phosphoproteomic analysis.</title>
        <authorList>
            <person name="Cantin G.T."/>
            <person name="Yi W."/>
            <person name="Lu B."/>
            <person name="Park S.K."/>
            <person name="Xu T."/>
            <person name="Lee J.-D."/>
            <person name="Yates J.R. III"/>
        </authorList>
    </citation>
    <scope>PHOSPHORYLATION [LARGE SCALE ANALYSIS] AT SER-97</scope>
    <scope>IDENTIFICATION BY MASS SPECTROMETRY [LARGE SCALE ANALYSIS]</scope>
    <source>
        <tissue>Cervix carcinoma</tissue>
    </source>
</reference>
<reference key="5">
    <citation type="journal article" date="2008" name="Proc. Natl. Acad. Sci. U.S.A.">
        <title>A quantitative atlas of mitotic phosphorylation.</title>
        <authorList>
            <person name="Dephoure N."/>
            <person name="Zhou C."/>
            <person name="Villen J."/>
            <person name="Beausoleil S.A."/>
            <person name="Bakalarski C.E."/>
            <person name="Elledge S.J."/>
            <person name="Gygi S.P."/>
        </authorList>
    </citation>
    <scope>PHOSPHORYLATION [LARGE SCALE ANALYSIS] AT SER-17 AND SER-83</scope>
    <scope>IDENTIFICATION BY MASS SPECTROMETRY [LARGE SCALE ANALYSIS]</scope>
    <source>
        <tissue>Cervix carcinoma</tissue>
    </source>
</reference>
<reference key="6">
    <citation type="journal article" date="2009" name="Anal. Chem.">
        <title>Lys-N and trypsin cover complementary parts of the phosphoproteome in a refined SCX-based approach.</title>
        <authorList>
            <person name="Gauci S."/>
            <person name="Helbig A.O."/>
            <person name="Slijper M."/>
            <person name="Krijgsveld J."/>
            <person name="Heck A.J."/>
            <person name="Mohammed S."/>
        </authorList>
    </citation>
    <scope>IDENTIFICATION BY MASS SPECTROMETRY [LARGE SCALE ANALYSIS]</scope>
</reference>
<reference key="7">
    <citation type="journal article" date="2011" name="BMC Syst. Biol.">
        <title>Initial characterization of the human central proteome.</title>
        <authorList>
            <person name="Burkard T.R."/>
            <person name="Planyavsky M."/>
            <person name="Kaupe I."/>
            <person name="Breitwieser F.P."/>
            <person name="Buerckstuemmer T."/>
            <person name="Bennett K.L."/>
            <person name="Superti-Furga G."/>
            <person name="Colinge J."/>
        </authorList>
    </citation>
    <scope>IDENTIFICATION BY MASS SPECTROMETRY [LARGE SCALE ANALYSIS]</scope>
</reference>
<reference key="8">
    <citation type="journal article" date="2011" name="Sci. Signal.">
        <title>System-wide temporal characterization of the proteome and phosphoproteome of human embryonic stem cell differentiation.</title>
        <authorList>
            <person name="Rigbolt K.T."/>
            <person name="Prokhorova T.A."/>
            <person name="Akimov V."/>
            <person name="Henningsen J."/>
            <person name="Johansen P.T."/>
            <person name="Kratchmarova I."/>
            <person name="Kassem M."/>
            <person name="Mann M."/>
            <person name="Olsen J.V."/>
            <person name="Blagoev B."/>
        </authorList>
    </citation>
    <scope>PHOSPHORYLATION [LARGE SCALE ANALYSIS] AT SER-83; SER-90 AND SER-97</scope>
    <scope>IDENTIFICATION BY MASS SPECTROMETRY [LARGE SCALE ANALYSIS]</scope>
</reference>
<reference key="9">
    <citation type="journal article" date="2013" name="J. Proteome Res.">
        <title>Toward a comprehensive characterization of a human cancer cell phosphoproteome.</title>
        <authorList>
            <person name="Zhou H."/>
            <person name="Di Palma S."/>
            <person name="Preisinger C."/>
            <person name="Peng M."/>
            <person name="Polat A.N."/>
            <person name="Heck A.J."/>
            <person name="Mohammed S."/>
        </authorList>
    </citation>
    <scope>PHOSPHORYLATION [LARGE SCALE ANALYSIS] AT SER-83; SER-90; SER-97; SER-125; SER-132; SER-139 AND SER-160</scope>
    <scope>IDENTIFICATION BY MASS SPECTROMETRY [LARGE SCALE ANALYSIS]</scope>
    <source>
        <tissue>Cervix carcinoma</tissue>
        <tissue>Erythroleukemia</tissue>
    </source>
</reference>
<reference key="10">
    <citation type="journal article" date="2019" name="Nucleic Acids Res.">
        <title>MIR sequences recruit zinc finger protein ZNF768 to expressed genes.</title>
        <authorList>
            <person name="Rohrmoser M."/>
            <person name="Kluge M."/>
            <person name="Yahia Y."/>
            <person name="Gruber-Eber A."/>
            <person name="Maqbool M.A."/>
            <person name="Forne I."/>
            <person name="Krebs S."/>
            <person name="Blum H."/>
            <person name="Greifenberg A.K."/>
            <person name="Geyer M."/>
            <person name="Descostes N."/>
            <person name="Imhof A."/>
            <person name="Andrau J.C."/>
            <person name="Friedel C.C."/>
            <person name="Eick D."/>
        </authorList>
    </citation>
    <scope>FUNCTION</scope>
    <scope>INTERACTION WITH ELF3</scope>
    <scope>SUBCELLULAR LOCATION</scope>
    <scope>PHOSPHORYLATION</scope>
</reference>
<reference key="11">
    <citation type="journal article" date="2021" name="Nat. Commun.">
        <title>ZNF768 links oncogenic RAS to cellular senescence.</title>
        <authorList>
            <person name="Villot R."/>
            <person name="Poirier A."/>
            <person name="Bakan I."/>
            <person name="Boulay K."/>
            <person name="Fernandez E."/>
            <person name="Devillers R."/>
            <person name="Gama-Braga L."/>
            <person name="Tribouillard L."/>
            <person name="Gagne A."/>
            <person name="Duchesne E."/>
            <person name="Caron D."/>
            <person name="Berube J.S."/>
            <person name="Berube J.C."/>
            <person name="Coulombe Y."/>
            <person name="Orain M."/>
            <person name="Gelinas Y."/>
            <person name="Gobeil S."/>
            <person name="Bosse Y."/>
            <person name="Masson J.Y."/>
            <person name="Elowe S."/>
            <person name="Bilodeau S."/>
            <person name="Manem V."/>
            <person name="Joubert P."/>
            <person name="Mallette F.A."/>
            <person name="Laplante M."/>
        </authorList>
    </citation>
    <scope>FUNCTION</scope>
    <scope>INTERACTION WITH TP53</scope>
    <scope>PHOSPHORYLATION AT SER-17; SER-18; SER-23; TYR-27; SER-33; SER-62; SER-69; SER-76; SER-83; SER-90; SER-97; SER-104; SER-107; SER-111; SER-118; SER-125; TYR-128; SER-132; TYR-135; SER-139; TYR-142; SER-144; SER-147; THR-158; SER-160; THR-284; TYR-289; SER-295; SER-299; THR-396 AND SER-442</scope>
    <scope>MUTAGENESIS OF SER-62; SER-69; SER-76; SER-83; SER-90; SER-97; SER-125; SER-132; SER-139 AND SER-160</scope>
</reference>